<gene>
    <name evidence="1" type="primary">rsmG</name>
    <name type="ordered locus">MYPU_1280</name>
</gene>
<accession>Q98R82</accession>
<sequence length="227" mass="26276">MNCLEKITNEYGQKTASRLEQFVKLIEEENKKINLTSFEGQRLWQEGIYESIKCLEPFVKSNDSLLDIGAGVGFPSVPFLIVNPEVKLTIIESNKKRVLFLEKVKKDLNLSFEIFNGRVENFNKEIHFDFITARALAPLNILMELTINLGSILPKPTNYIFVKGANYLSELNEAQNAIKILKLKVFDLKKIDVFFDKNIFMIHYIKTANVSKEYPRAWDKIIKKPIR</sequence>
<name>RSMG_MYCPU</name>
<reference key="1">
    <citation type="journal article" date="2001" name="Nucleic Acids Res.">
        <title>The complete genome sequence of the murine respiratory pathogen Mycoplasma pulmonis.</title>
        <authorList>
            <person name="Chambaud I."/>
            <person name="Heilig R."/>
            <person name="Ferris S."/>
            <person name="Barbe V."/>
            <person name="Samson D."/>
            <person name="Galisson F."/>
            <person name="Moszer I."/>
            <person name="Dybvig K."/>
            <person name="Wroblewski H."/>
            <person name="Viari A."/>
            <person name="Rocha E.P.C."/>
            <person name="Blanchard A."/>
        </authorList>
    </citation>
    <scope>NUCLEOTIDE SEQUENCE [LARGE SCALE GENOMIC DNA]</scope>
    <source>
        <strain>UAB CTIP</strain>
    </source>
</reference>
<keyword id="KW-0963">Cytoplasm</keyword>
<keyword id="KW-0489">Methyltransferase</keyword>
<keyword id="KW-1185">Reference proteome</keyword>
<keyword id="KW-0698">rRNA processing</keyword>
<keyword id="KW-0949">S-adenosyl-L-methionine</keyword>
<keyword id="KW-0808">Transferase</keyword>
<dbReference type="EC" id="2.1.1.-" evidence="1"/>
<dbReference type="EMBL" id="AL445563">
    <property type="protein sequence ID" value="CAC13301.1"/>
    <property type="molecule type" value="Genomic_DNA"/>
</dbReference>
<dbReference type="PIR" id="H90527">
    <property type="entry name" value="H90527"/>
</dbReference>
<dbReference type="SMR" id="Q98R82"/>
<dbReference type="STRING" id="272635.gene:17576709"/>
<dbReference type="KEGG" id="mpu:MYPU_1280"/>
<dbReference type="eggNOG" id="COG0357">
    <property type="taxonomic scope" value="Bacteria"/>
</dbReference>
<dbReference type="HOGENOM" id="CLU_065341_0_0_14"/>
<dbReference type="BioCyc" id="MPUL272635:G1GT6-127-MONOMER"/>
<dbReference type="Proteomes" id="UP000000528">
    <property type="component" value="Chromosome"/>
</dbReference>
<dbReference type="GO" id="GO:0005829">
    <property type="term" value="C:cytosol"/>
    <property type="evidence" value="ECO:0007669"/>
    <property type="project" value="TreeGrafter"/>
</dbReference>
<dbReference type="GO" id="GO:0070043">
    <property type="term" value="F:rRNA (guanine-N7-)-methyltransferase activity"/>
    <property type="evidence" value="ECO:0007669"/>
    <property type="project" value="UniProtKB-UniRule"/>
</dbReference>
<dbReference type="Gene3D" id="3.40.50.150">
    <property type="entry name" value="Vaccinia Virus protein VP39"/>
    <property type="match status" value="1"/>
</dbReference>
<dbReference type="HAMAP" id="MF_00074">
    <property type="entry name" value="16SrRNA_methyltr_G"/>
    <property type="match status" value="1"/>
</dbReference>
<dbReference type="InterPro" id="IPR003682">
    <property type="entry name" value="rRNA_ssu_MeTfrase_G"/>
</dbReference>
<dbReference type="InterPro" id="IPR029063">
    <property type="entry name" value="SAM-dependent_MTases_sf"/>
</dbReference>
<dbReference type="NCBIfam" id="TIGR00138">
    <property type="entry name" value="rsmG_gidB"/>
    <property type="match status" value="1"/>
</dbReference>
<dbReference type="PANTHER" id="PTHR31760">
    <property type="entry name" value="S-ADENOSYL-L-METHIONINE-DEPENDENT METHYLTRANSFERASES SUPERFAMILY PROTEIN"/>
    <property type="match status" value="1"/>
</dbReference>
<dbReference type="PANTHER" id="PTHR31760:SF0">
    <property type="entry name" value="S-ADENOSYL-L-METHIONINE-DEPENDENT METHYLTRANSFERASES SUPERFAMILY PROTEIN"/>
    <property type="match status" value="1"/>
</dbReference>
<dbReference type="Pfam" id="PF02527">
    <property type="entry name" value="GidB"/>
    <property type="match status" value="1"/>
</dbReference>
<dbReference type="PIRSF" id="PIRSF003078">
    <property type="entry name" value="GidB"/>
    <property type="match status" value="1"/>
</dbReference>
<dbReference type="SUPFAM" id="SSF53335">
    <property type="entry name" value="S-adenosyl-L-methionine-dependent methyltransferases"/>
    <property type="match status" value="1"/>
</dbReference>
<proteinExistence type="inferred from homology"/>
<feature type="chain" id="PRO_0000184290" description="Ribosomal RNA small subunit methyltransferase G">
    <location>
        <begin position="1"/>
        <end position="227"/>
    </location>
</feature>
<feature type="binding site" evidence="1">
    <location>
        <position position="69"/>
    </location>
    <ligand>
        <name>S-adenosyl-L-methionine</name>
        <dbReference type="ChEBI" id="CHEBI:59789"/>
    </ligand>
</feature>
<feature type="binding site" evidence="1">
    <location>
        <position position="74"/>
    </location>
    <ligand>
        <name>S-adenosyl-L-methionine</name>
        <dbReference type="ChEBI" id="CHEBI:59789"/>
    </ligand>
</feature>
<feature type="binding site" evidence="1">
    <location>
        <begin position="119"/>
        <end position="120"/>
    </location>
    <ligand>
        <name>S-adenosyl-L-methionine</name>
        <dbReference type="ChEBI" id="CHEBI:59789"/>
    </ligand>
</feature>
<feature type="binding site" evidence="1">
    <location>
        <position position="134"/>
    </location>
    <ligand>
        <name>S-adenosyl-L-methionine</name>
        <dbReference type="ChEBI" id="CHEBI:59789"/>
    </ligand>
</feature>
<protein>
    <recommendedName>
        <fullName evidence="1">Ribosomal RNA small subunit methyltransferase G</fullName>
        <ecNumber evidence="1">2.1.1.-</ecNumber>
    </recommendedName>
    <alternativeName>
        <fullName evidence="1">16S rRNA 7-methylguanosine methyltransferase</fullName>
        <shortName evidence="1">16S rRNA m7G methyltransferase</shortName>
    </alternativeName>
</protein>
<evidence type="ECO:0000255" key="1">
    <source>
        <dbReference type="HAMAP-Rule" id="MF_00074"/>
    </source>
</evidence>
<organism>
    <name type="scientific">Mycoplasmopsis pulmonis (strain UAB CTIP)</name>
    <name type="common">Mycoplasma pulmonis</name>
    <dbReference type="NCBI Taxonomy" id="272635"/>
    <lineage>
        <taxon>Bacteria</taxon>
        <taxon>Bacillati</taxon>
        <taxon>Mycoplasmatota</taxon>
        <taxon>Mycoplasmoidales</taxon>
        <taxon>Metamycoplasmataceae</taxon>
        <taxon>Mycoplasmopsis</taxon>
    </lineage>
</organism>
<comment type="function">
    <text evidence="1">Specifically methylates the N7 position of a guanine in 16S rRNA.</text>
</comment>
<comment type="subcellular location">
    <subcellularLocation>
        <location evidence="1">Cytoplasm</location>
    </subcellularLocation>
</comment>
<comment type="similarity">
    <text evidence="1">Belongs to the methyltransferase superfamily. RNA methyltransferase RsmG family.</text>
</comment>